<accession>C1ER67</accession>
<proteinExistence type="inferred from homology"/>
<protein>
    <recommendedName>
        <fullName evidence="1">Small ribosomal subunit protein bS6</fullName>
    </recommendedName>
    <alternativeName>
        <fullName evidence="2">30S ribosomal protein S6</fullName>
    </alternativeName>
</protein>
<evidence type="ECO:0000255" key="1">
    <source>
        <dbReference type="HAMAP-Rule" id="MF_00360"/>
    </source>
</evidence>
<evidence type="ECO:0000305" key="2"/>
<organism>
    <name type="scientific">Bacillus cereus (strain 03BB102)</name>
    <dbReference type="NCBI Taxonomy" id="572264"/>
    <lineage>
        <taxon>Bacteria</taxon>
        <taxon>Bacillati</taxon>
        <taxon>Bacillota</taxon>
        <taxon>Bacilli</taxon>
        <taxon>Bacillales</taxon>
        <taxon>Bacillaceae</taxon>
        <taxon>Bacillus</taxon>
        <taxon>Bacillus cereus group</taxon>
    </lineage>
</organism>
<reference key="1">
    <citation type="submission" date="2009-02" db="EMBL/GenBank/DDBJ databases">
        <title>Genome sequence of Bacillus cereus 03BB102.</title>
        <authorList>
            <person name="Dodson R.J."/>
            <person name="Jackson P."/>
            <person name="Munk A.C."/>
            <person name="Brettin T."/>
            <person name="Bruce D."/>
            <person name="Detter C."/>
            <person name="Tapia R."/>
            <person name="Han C."/>
            <person name="Sutton G."/>
            <person name="Sims D."/>
        </authorList>
    </citation>
    <scope>NUCLEOTIDE SEQUENCE [LARGE SCALE GENOMIC DNA]</scope>
    <source>
        <strain>03BB102</strain>
    </source>
</reference>
<keyword id="KW-0687">Ribonucleoprotein</keyword>
<keyword id="KW-0689">Ribosomal protein</keyword>
<keyword id="KW-0694">RNA-binding</keyword>
<keyword id="KW-0699">rRNA-binding</keyword>
<name>RS6_BACC3</name>
<sequence length="96" mass="11269">MRKYEIMYIIRPGVEEEAQKALVERFAGVLTNNGAEIINTKEWGKRRLAYEINDLREGFYMILNVNANAEAINEFDRLAKINEDILRHIVVKEEEK</sequence>
<dbReference type="EMBL" id="CP001407">
    <property type="protein sequence ID" value="ACO26978.1"/>
    <property type="molecule type" value="Genomic_DNA"/>
</dbReference>
<dbReference type="RefSeq" id="WP_001233779.1">
    <property type="nucleotide sequence ID" value="NZ_CP009318.1"/>
</dbReference>
<dbReference type="SMR" id="C1ER67"/>
<dbReference type="GeneID" id="75088663"/>
<dbReference type="KEGG" id="bcx:BCA_5629"/>
<dbReference type="PATRIC" id="fig|572264.18.peg.51"/>
<dbReference type="Proteomes" id="UP000002210">
    <property type="component" value="Chromosome"/>
</dbReference>
<dbReference type="GO" id="GO:0005737">
    <property type="term" value="C:cytoplasm"/>
    <property type="evidence" value="ECO:0007669"/>
    <property type="project" value="UniProtKB-ARBA"/>
</dbReference>
<dbReference type="GO" id="GO:1990904">
    <property type="term" value="C:ribonucleoprotein complex"/>
    <property type="evidence" value="ECO:0007669"/>
    <property type="project" value="UniProtKB-KW"/>
</dbReference>
<dbReference type="GO" id="GO:0005840">
    <property type="term" value="C:ribosome"/>
    <property type="evidence" value="ECO:0007669"/>
    <property type="project" value="UniProtKB-KW"/>
</dbReference>
<dbReference type="GO" id="GO:0070181">
    <property type="term" value="F:small ribosomal subunit rRNA binding"/>
    <property type="evidence" value="ECO:0007669"/>
    <property type="project" value="TreeGrafter"/>
</dbReference>
<dbReference type="GO" id="GO:0003735">
    <property type="term" value="F:structural constituent of ribosome"/>
    <property type="evidence" value="ECO:0007669"/>
    <property type="project" value="InterPro"/>
</dbReference>
<dbReference type="GO" id="GO:0006412">
    <property type="term" value="P:translation"/>
    <property type="evidence" value="ECO:0007669"/>
    <property type="project" value="UniProtKB-UniRule"/>
</dbReference>
<dbReference type="CDD" id="cd00473">
    <property type="entry name" value="bS6"/>
    <property type="match status" value="1"/>
</dbReference>
<dbReference type="FunFam" id="3.30.70.60:FF:000002">
    <property type="entry name" value="30S ribosomal protein S6"/>
    <property type="match status" value="1"/>
</dbReference>
<dbReference type="Gene3D" id="3.30.70.60">
    <property type="match status" value="1"/>
</dbReference>
<dbReference type="HAMAP" id="MF_00360">
    <property type="entry name" value="Ribosomal_bS6"/>
    <property type="match status" value="1"/>
</dbReference>
<dbReference type="InterPro" id="IPR000529">
    <property type="entry name" value="Ribosomal_bS6"/>
</dbReference>
<dbReference type="InterPro" id="IPR020815">
    <property type="entry name" value="Ribosomal_bS6_CS"/>
</dbReference>
<dbReference type="InterPro" id="IPR035980">
    <property type="entry name" value="Ribosomal_bS6_sf"/>
</dbReference>
<dbReference type="InterPro" id="IPR020814">
    <property type="entry name" value="Ribosomal_S6_plastid/chlpt"/>
</dbReference>
<dbReference type="InterPro" id="IPR014717">
    <property type="entry name" value="Transl_elong_EF1B/ribsomal_bS6"/>
</dbReference>
<dbReference type="NCBIfam" id="TIGR00166">
    <property type="entry name" value="S6"/>
    <property type="match status" value="1"/>
</dbReference>
<dbReference type="PANTHER" id="PTHR21011">
    <property type="entry name" value="MITOCHONDRIAL 28S RIBOSOMAL PROTEIN S6"/>
    <property type="match status" value="1"/>
</dbReference>
<dbReference type="PANTHER" id="PTHR21011:SF1">
    <property type="entry name" value="SMALL RIBOSOMAL SUBUNIT PROTEIN BS6M"/>
    <property type="match status" value="1"/>
</dbReference>
<dbReference type="Pfam" id="PF01250">
    <property type="entry name" value="Ribosomal_S6"/>
    <property type="match status" value="1"/>
</dbReference>
<dbReference type="SUPFAM" id="SSF54995">
    <property type="entry name" value="Ribosomal protein S6"/>
    <property type="match status" value="1"/>
</dbReference>
<dbReference type="PROSITE" id="PS01048">
    <property type="entry name" value="RIBOSOMAL_S6"/>
    <property type="match status" value="1"/>
</dbReference>
<gene>
    <name evidence="1" type="primary">rpsF</name>
    <name type="ordered locus">BCA_5629</name>
</gene>
<feature type="chain" id="PRO_1000133509" description="Small ribosomal subunit protein bS6">
    <location>
        <begin position="1"/>
        <end position="96"/>
    </location>
</feature>
<comment type="function">
    <text evidence="1">Binds together with bS18 to 16S ribosomal RNA.</text>
</comment>
<comment type="similarity">
    <text evidence="1">Belongs to the bacterial ribosomal protein bS6 family.</text>
</comment>